<evidence type="ECO:0000255" key="1"/>
<evidence type="ECO:0000255" key="2">
    <source>
        <dbReference type="PROSITE-ProRule" id="PRU00037"/>
    </source>
</evidence>
<evidence type="ECO:0000256" key="3">
    <source>
        <dbReference type="SAM" id="MobiDB-lite"/>
    </source>
</evidence>
<evidence type="ECO:0000269" key="4">
    <source>
    </source>
</evidence>
<evidence type="ECO:0000305" key="5"/>
<proteinExistence type="evidence at protein level"/>
<gene>
    <name type="primary">RHOBTB1</name>
    <name type="synonym">KIAA0740</name>
</gene>
<name>RHBT1_HUMAN</name>
<comment type="interaction">
    <interactant intactId="EBI-6426999">
        <id>O94844</id>
    </interactant>
    <interactant intactId="EBI-399080">
        <id>Q92993</id>
        <label>KAT5</label>
    </interactant>
    <organismsDiffer>false</organismsDiffer>
    <experiments>3</experiments>
</comment>
<comment type="interaction">
    <interactant intactId="EBI-6426999">
        <id>O94844</id>
    </interactant>
    <interactant intactId="EBI-11742507">
        <id>Q8TAP4-4</id>
        <label>LMO3</label>
    </interactant>
    <organismsDiffer>false</organismsDiffer>
    <experiments>3</experiments>
</comment>
<comment type="interaction">
    <interactant intactId="EBI-6426999">
        <id>O94844</id>
    </interactant>
    <interactant intactId="EBI-1383528">
        <id>P17252</id>
        <label>PRKCA</label>
    </interactant>
    <organismsDiffer>false</organismsDiffer>
    <experiments>3</experiments>
</comment>
<comment type="interaction">
    <interactant intactId="EBI-6426999">
        <id>O94844</id>
    </interactant>
    <interactant intactId="EBI-21251460">
        <id>O60260-5</id>
        <label>PRKN</label>
    </interactant>
    <organismsDiffer>false</organismsDiffer>
    <experiments>3</experiments>
</comment>
<comment type="interaction">
    <interactant intactId="EBI-6426999">
        <id>O94844</id>
    </interactant>
    <interactant intactId="EBI-9090795">
        <id>Q15047-2</id>
        <label>SETDB1</label>
    </interactant>
    <organismsDiffer>false</organismsDiffer>
    <experiments>3</experiments>
</comment>
<comment type="interaction">
    <interactant intactId="EBI-6426999">
        <id>O94844</id>
    </interactant>
    <interactant intactId="EBI-359832">
        <id>P61981</id>
        <label>YWHAG</label>
    </interactant>
    <organismsDiffer>false</organismsDiffer>
    <experiments>3</experiments>
</comment>
<comment type="tissue specificity">
    <text evidence="4">Ubiquitous, with highest levels in skeletal muscle, placenta, testis, stomach, and kidney, followed by uterus and adrenal gland. Expressed in a variety of fetal tissues.</text>
</comment>
<comment type="similarity">
    <text evidence="5">Belongs to the small GTPase superfamily. Rho family.</text>
</comment>
<comment type="online information" name="Atlas of Genetics and Cytogenetics in Oncology and Haematology">
    <link uri="https://atlasgeneticsoncology.org/gene/42981/RHOBTB1"/>
</comment>
<keyword id="KW-0342">GTP-binding</keyword>
<keyword id="KW-0547">Nucleotide-binding</keyword>
<keyword id="KW-1267">Proteomics identification</keyword>
<keyword id="KW-1185">Reference proteome</keyword>
<keyword id="KW-0677">Repeat</keyword>
<feature type="chain" id="PRO_0000198960" description="Rho-related BTB domain-containing protein 1">
    <location>
        <begin position="1"/>
        <end position="696"/>
    </location>
</feature>
<feature type="domain" description="BTB 1" evidence="2">
    <location>
        <begin position="266"/>
        <end position="427"/>
    </location>
</feature>
<feature type="domain" description="BTB 2" evidence="2">
    <location>
        <begin position="485"/>
        <end position="552"/>
    </location>
</feature>
<feature type="region of interest" description="Rho-like">
    <location>
        <begin position="1"/>
        <end position="210"/>
    </location>
</feature>
<feature type="region of interest" description="Disordered" evidence="3">
    <location>
        <begin position="327"/>
        <end position="348"/>
    </location>
</feature>
<feature type="binding site" evidence="1">
    <location>
        <begin position="21"/>
        <end position="28"/>
    </location>
    <ligand>
        <name>GTP</name>
        <dbReference type="ChEBI" id="CHEBI:37565"/>
    </ligand>
</feature>
<feature type="binding site" evidence="1">
    <location>
        <begin position="84"/>
        <end position="88"/>
    </location>
    <ligand>
        <name>GTP</name>
        <dbReference type="ChEBI" id="CHEBI:37565"/>
    </ligand>
</feature>
<feature type="binding site" evidence="1">
    <location>
        <begin position="140"/>
        <end position="143"/>
    </location>
    <ligand>
        <name>GTP</name>
        <dbReference type="ChEBI" id="CHEBI:37565"/>
    </ligand>
</feature>
<organism>
    <name type="scientific">Homo sapiens</name>
    <name type="common">Human</name>
    <dbReference type="NCBI Taxonomy" id="9606"/>
    <lineage>
        <taxon>Eukaryota</taxon>
        <taxon>Metazoa</taxon>
        <taxon>Chordata</taxon>
        <taxon>Craniata</taxon>
        <taxon>Vertebrata</taxon>
        <taxon>Euteleostomi</taxon>
        <taxon>Mammalia</taxon>
        <taxon>Eutheria</taxon>
        <taxon>Euarchontoglires</taxon>
        <taxon>Primates</taxon>
        <taxon>Haplorrhini</taxon>
        <taxon>Catarrhini</taxon>
        <taxon>Hominidae</taxon>
        <taxon>Homo</taxon>
    </lineage>
</organism>
<dbReference type="EMBL" id="AB018283">
    <property type="protein sequence ID" value="BAA34460.2"/>
    <property type="molecule type" value="mRNA"/>
</dbReference>
<dbReference type="EMBL" id="AK075129">
    <property type="protein sequence ID" value="BAC11421.1"/>
    <property type="molecule type" value="mRNA"/>
</dbReference>
<dbReference type="EMBL" id="BC032848">
    <property type="protein sequence ID" value="AAH32848.1"/>
    <property type="molecule type" value="mRNA"/>
</dbReference>
<dbReference type="EMBL" id="BC041791">
    <property type="protein sequence ID" value="AAH41791.1"/>
    <property type="molecule type" value="mRNA"/>
</dbReference>
<dbReference type="CCDS" id="CCDS7261.1"/>
<dbReference type="RefSeq" id="NP_001229288.1">
    <property type="nucleotide sequence ID" value="NM_001242359.2"/>
</dbReference>
<dbReference type="RefSeq" id="NP_001337831.1">
    <property type="nucleotide sequence ID" value="NM_001350902.2"/>
</dbReference>
<dbReference type="RefSeq" id="NP_001337832.1">
    <property type="nucleotide sequence ID" value="NM_001350903.2"/>
</dbReference>
<dbReference type="RefSeq" id="NP_001337833.1">
    <property type="nucleotide sequence ID" value="NM_001350904.2"/>
</dbReference>
<dbReference type="RefSeq" id="NP_001337834.1">
    <property type="nucleotide sequence ID" value="NM_001350905.2"/>
</dbReference>
<dbReference type="RefSeq" id="NP_055651.1">
    <property type="nucleotide sequence ID" value="NM_014836.5"/>
</dbReference>
<dbReference type="RefSeq" id="XP_006718147.1">
    <property type="nucleotide sequence ID" value="XM_006718084.1"/>
</dbReference>
<dbReference type="RefSeq" id="XP_006718148.1">
    <property type="nucleotide sequence ID" value="XM_006718085.2"/>
</dbReference>
<dbReference type="RefSeq" id="XP_011538726.1">
    <property type="nucleotide sequence ID" value="XM_011540424.2"/>
</dbReference>
<dbReference type="RefSeq" id="XP_016872489.1">
    <property type="nucleotide sequence ID" value="XM_017017000.3"/>
</dbReference>
<dbReference type="RefSeq" id="XP_016872490.1">
    <property type="nucleotide sequence ID" value="XM_017017001.1"/>
</dbReference>
<dbReference type="RefSeq" id="XP_024304038.1">
    <property type="nucleotide sequence ID" value="XM_024448270.2"/>
</dbReference>
<dbReference type="RefSeq" id="XP_024304039.1">
    <property type="nucleotide sequence ID" value="XM_024448271.2"/>
</dbReference>
<dbReference type="RefSeq" id="XP_024304040.1">
    <property type="nucleotide sequence ID" value="XM_024448272.2"/>
</dbReference>
<dbReference type="RefSeq" id="XP_024304041.1">
    <property type="nucleotide sequence ID" value="XM_024448273.2"/>
</dbReference>
<dbReference type="RefSeq" id="XP_047282030.1">
    <property type="nucleotide sequence ID" value="XM_047426074.1"/>
</dbReference>
<dbReference type="RefSeq" id="XP_047282031.1">
    <property type="nucleotide sequence ID" value="XM_047426075.1"/>
</dbReference>
<dbReference type="RefSeq" id="XP_047282032.1">
    <property type="nucleotide sequence ID" value="XM_047426076.1"/>
</dbReference>
<dbReference type="RefSeq" id="XP_047282033.1">
    <property type="nucleotide sequence ID" value="XM_047426077.1"/>
</dbReference>
<dbReference type="RefSeq" id="XP_047282034.1">
    <property type="nucleotide sequence ID" value="XM_047426078.1"/>
</dbReference>
<dbReference type="RefSeq" id="XP_047282035.1">
    <property type="nucleotide sequence ID" value="XM_047426079.1"/>
</dbReference>
<dbReference type="RefSeq" id="XP_047282036.1">
    <property type="nucleotide sequence ID" value="XM_047426080.1"/>
</dbReference>
<dbReference type="RefSeq" id="XP_047282037.1">
    <property type="nucleotide sequence ID" value="XM_047426081.1"/>
</dbReference>
<dbReference type="RefSeq" id="XP_047282038.1">
    <property type="nucleotide sequence ID" value="XM_047426082.1"/>
</dbReference>
<dbReference type="RefSeq" id="XP_047282039.1">
    <property type="nucleotide sequence ID" value="XM_047426083.1"/>
</dbReference>
<dbReference type="RefSeq" id="XP_047282040.1">
    <property type="nucleotide sequence ID" value="XM_047426084.1"/>
</dbReference>
<dbReference type="RefSeq" id="XP_047282042.1">
    <property type="nucleotide sequence ID" value="XM_047426086.1"/>
</dbReference>
<dbReference type="RefSeq" id="XP_047282043.1">
    <property type="nucleotide sequence ID" value="XM_047426087.1"/>
</dbReference>
<dbReference type="RefSeq" id="XP_047282044.1">
    <property type="nucleotide sequence ID" value="XM_047426088.1"/>
</dbReference>
<dbReference type="RefSeq" id="XP_047282045.1">
    <property type="nucleotide sequence ID" value="XM_047426089.1"/>
</dbReference>
<dbReference type="RefSeq" id="XP_047282046.1">
    <property type="nucleotide sequence ID" value="XM_047426090.1"/>
</dbReference>
<dbReference type="RefSeq" id="XP_047282047.1">
    <property type="nucleotide sequence ID" value="XM_047426091.1"/>
</dbReference>
<dbReference type="RefSeq" id="XP_047282048.1">
    <property type="nucleotide sequence ID" value="XM_047426092.1"/>
</dbReference>
<dbReference type="RefSeq" id="XP_047282049.1">
    <property type="nucleotide sequence ID" value="XM_047426093.1"/>
</dbReference>
<dbReference type="RefSeq" id="XP_047282050.1">
    <property type="nucleotide sequence ID" value="XM_047426094.1"/>
</dbReference>
<dbReference type="RefSeq" id="XP_047282051.1">
    <property type="nucleotide sequence ID" value="XM_047426095.1"/>
</dbReference>
<dbReference type="RefSeq" id="XP_054223270.1">
    <property type="nucleotide sequence ID" value="XM_054367295.1"/>
</dbReference>
<dbReference type="RefSeq" id="XP_054223271.1">
    <property type="nucleotide sequence ID" value="XM_054367296.1"/>
</dbReference>
<dbReference type="RefSeq" id="XP_054223272.1">
    <property type="nucleotide sequence ID" value="XM_054367297.1"/>
</dbReference>
<dbReference type="RefSeq" id="XP_054223273.1">
    <property type="nucleotide sequence ID" value="XM_054367298.1"/>
</dbReference>
<dbReference type="RefSeq" id="XP_054223274.1">
    <property type="nucleotide sequence ID" value="XM_054367299.1"/>
</dbReference>
<dbReference type="RefSeq" id="XP_054223275.1">
    <property type="nucleotide sequence ID" value="XM_054367300.1"/>
</dbReference>
<dbReference type="RefSeq" id="XP_054223276.1">
    <property type="nucleotide sequence ID" value="XM_054367301.1"/>
</dbReference>
<dbReference type="RefSeq" id="XP_054223277.1">
    <property type="nucleotide sequence ID" value="XM_054367302.1"/>
</dbReference>
<dbReference type="RefSeq" id="XP_054223278.1">
    <property type="nucleotide sequence ID" value="XM_054367303.1"/>
</dbReference>
<dbReference type="RefSeq" id="XP_054223279.1">
    <property type="nucleotide sequence ID" value="XM_054367304.1"/>
</dbReference>
<dbReference type="RefSeq" id="XP_054223280.1">
    <property type="nucleotide sequence ID" value="XM_054367305.1"/>
</dbReference>
<dbReference type="RefSeq" id="XP_054223281.1">
    <property type="nucleotide sequence ID" value="XM_054367306.1"/>
</dbReference>
<dbReference type="RefSeq" id="XP_054223282.1">
    <property type="nucleotide sequence ID" value="XM_054367307.1"/>
</dbReference>
<dbReference type="RefSeq" id="XP_054223283.1">
    <property type="nucleotide sequence ID" value="XM_054367308.1"/>
</dbReference>
<dbReference type="RefSeq" id="XP_054223284.1">
    <property type="nucleotide sequence ID" value="XM_054367309.1"/>
</dbReference>
<dbReference type="RefSeq" id="XP_054223285.1">
    <property type="nucleotide sequence ID" value="XM_054367310.1"/>
</dbReference>
<dbReference type="RefSeq" id="XP_054223286.1">
    <property type="nucleotide sequence ID" value="XM_054367311.1"/>
</dbReference>
<dbReference type="RefSeq" id="XP_054223287.1">
    <property type="nucleotide sequence ID" value="XM_054367312.1"/>
</dbReference>
<dbReference type="RefSeq" id="XP_054223288.1">
    <property type="nucleotide sequence ID" value="XM_054367313.1"/>
</dbReference>
<dbReference type="RefSeq" id="XP_054223289.1">
    <property type="nucleotide sequence ID" value="XM_054367314.1"/>
</dbReference>
<dbReference type="RefSeq" id="XP_054223290.1">
    <property type="nucleotide sequence ID" value="XM_054367315.1"/>
</dbReference>
<dbReference type="RefSeq" id="XP_054223291.1">
    <property type="nucleotide sequence ID" value="XM_054367316.1"/>
</dbReference>
<dbReference type="RefSeq" id="XP_054223292.1">
    <property type="nucleotide sequence ID" value="XM_054367317.1"/>
</dbReference>
<dbReference type="RefSeq" id="XP_054223293.1">
    <property type="nucleotide sequence ID" value="XM_054367318.1"/>
</dbReference>
<dbReference type="RefSeq" id="XP_054223294.1">
    <property type="nucleotide sequence ID" value="XM_054367319.1"/>
</dbReference>
<dbReference type="RefSeq" id="XP_054223295.1">
    <property type="nucleotide sequence ID" value="XM_054367320.1"/>
</dbReference>
<dbReference type="RefSeq" id="XP_054223296.1">
    <property type="nucleotide sequence ID" value="XM_054367321.1"/>
</dbReference>
<dbReference type="RefSeq" id="XP_054223297.1">
    <property type="nucleotide sequence ID" value="XM_054367322.1"/>
</dbReference>
<dbReference type="SMR" id="O94844"/>
<dbReference type="BioGRID" id="115217">
    <property type="interactions" value="156"/>
</dbReference>
<dbReference type="FunCoup" id="O94844">
    <property type="interactions" value="521"/>
</dbReference>
<dbReference type="IntAct" id="O94844">
    <property type="interactions" value="27"/>
</dbReference>
<dbReference type="STRING" id="9606.ENSP00000338671"/>
<dbReference type="iPTMnet" id="O94844"/>
<dbReference type="PhosphoSitePlus" id="O94844"/>
<dbReference type="BioMuta" id="RHOBTB1"/>
<dbReference type="jPOST" id="O94844"/>
<dbReference type="MassIVE" id="O94844"/>
<dbReference type="PaxDb" id="9606-ENSP00000338671"/>
<dbReference type="PeptideAtlas" id="O94844"/>
<dbReference type="ProteomicsDB" id="50478"/>
<dbReference type="Pumba" id="O94844"/>
<dbReference type="Antibodypedia" id="14385">
    <property type="antibodies" value="181 antibodies from 28 providers"/>
</dbReference>
<dbReference type="DNASU" id="9886"/>
<dbReference type="Ensembl" id="ENST00000337910.10">
    <property type="protein sequence ID" value="ENSP00000338671.5"/>
    <property type="gene ID" value="ENSG00000072422.17"/>
</dbReference>
<dbReference type="Ensembl" id="ENST00000357917.4">
    <property type="protein sequence ID" value="ENSP00000350595.4"/>
    <property type="gene ID" value="ENSG00000072422.17"/>
</dbReference>
<dbReference type="GeneID" id="9886"/>
<dbReference type="KEGG" id="hsa:9886"/>
<dbReference type="MANE-Select" id="ENST00000337910.10">
    <property type="protein sequence ID" value="ENSP00000338671.5"/>
    <property type="RefSeq nucleotide sequence ID" value="NM_014836.5"/>
    <property type="RefSeq protein sequence ID" value="NP_055651.1"/>
</dbReference>
<dbReference type="UCSC" id="uc001jlh.4">
    <property type="organism name" value="human"/>
</dbReference>
<dbReference type="AGR" id="HGNC:18738"/>
<dbReference type="CTD" id="9886"/>
<dbReference type="DisGeNET" id="9886"/>
<dbReference type="GeneCards" id="RHOBTB1"/>
<dbReference type="HGNC" id="HGNC:18738">
    <property type="gene designation" value="RHOBTB1"/>
</dbReference>
<dbReference type="HPA" id="ENSG00000072422">
    <property type="expression patterns" value="Tissue enhanced (skeletal)"/>
</dbReference>
<dbReference type="MIM" id="607351">
    <property type="type" value="gene"/>
</dbReference>
<dbReference type="neXtProt" id="NX_O94844"/>
<dbReference type="OpenTargets" id="ENSG00000072422"/>
<dbReference type="PharmGKB" id="PA38664"/>
<dbReference type="VEuPathDB" id="HostDB:ENSG00000072422"/>
<dbReference type="eggNOG" id="KOG0393">
    <property type="taxonomic scope" value="Eukaryota"/>
</dbReference>
<dbReference type="GeneTree" id="ENSGT00940000159995"/>
<dbReference type="HOGENOM" id="CLU_015517_0_0_1"/>
<dbReference type="InParanoid" id="O94844"/>
<dbReference type="OMA" id="YLDETQC"/>
<dbReference type="OrthoDB" id="6020506at2759"/>
<dbReference type="PAN-GO" id="O94844">
    <property type="GO annotations" value="14 GO annotations based on evolutionary models"/>
</dbReference>
<dbReference type="PhylomeDB" id="O94844"/>
<dbReference type="TreeFam" id="TF323347"/>
<dbReference type="PathwayCommons" id="O94844"/>
<dbReference type="Reactome" id="R-HSA-9013422">
    <property type="pathway name" value="RHOBTB1 GTPase cycle"/>
</dbReference>
<dbReference type="SignaLink" id="O94844"/>
<dbReference type="SIGNOR" id="O94844"/>
<dbReference type="BioGRID-ORCS" id="9886">
    <property type="hits" value="14 hits in 1193 CRISPR screens"/>
</dbReference>
<dbReference type="ChiTaRS" id="RHOBTB1">
    <property type="organism name" value="human"/>
</dbReference>
<dbReference type="GeneWiki" id="RHOBTB1"/>
<dbReference type="GenomeRNAi" id="9886"/>
<dbReference type="Pharos" id="O94844">
    <property type="development level" value="Tbio"/>
</dbReference>
<dbReference type="PRO" id="PR:O94844"/>
<dbReference type="Proteomes" id="UP000005640">
    <property type="component" value="Chromosome 10"/>
</dbReference>
<dbReference type="RNAct" id="O94844">
    <property type="molecule type" value="protein"/>
</dbReference>
<dbReference type="Bgee" id="ENSG00000072422">
    <property type="expression patterns" value="Expressed in vastus lateralis and 200 other cell types or tissues"/>
</dbReference>
<dbReference type="ExpressionAtlas" id="O94844">
    <property type="expression patterns" value="baseline and differential"/>
</dbReference>
<dbReference type="GO" id="GO:0042995">
    <property type="term" value="C:cell projection"/>
    <property type="evidence" value="ECO:0000318"/>
    <property type="project" value="GO_Central"/>
</dbReference>
<dbReference type="GO" id="GO:0031410">
    <property type="term" value="C:cytoplasmic vesicle"/>
    <property type="evidence" value="ECO:0000318"/>
    <property type="project" value="GO_Central"/>
</dbReference>
<dbReference type="GO" id="GO:0005856">
    <property type="term" value="C:cytoskeleton"/>
    <property type="evidence" value="ECO:0000318"/>
    <property type="project" value="GO_Central"/>
</dbReference>
<dbReference type="GO" id="GO:0010008">
    <property type="term" value="C:endosome membrane"/>
    <property type="evidence" value="ECO:0000304"/>
    <property type="project" value="Reactome"/>
</dbReference>
<dbReference type="GO" id="GO:0005886">
    <property type="term" value="C:plasma membrane"/>
    <property type="evidence" value="ECO:0000318"/>
    <property type="project" value="GO_Central"/>
</dbReference>
<dbReference type="GO" id="GO:0005525">
    <property type="term" value="F:GTP binding"/>
    <property type="evidence" value="ECO:0000318"/>
    <property type="project" value="GO_Central"/>
</dbReference>
<dbReference type="GO" id="GO:0003924">
    <property type="term" value="F:GTPase activity"/>
    <property type="evidence" value="ECO:0000318"/>
    <property type="project" value="GO_Central"/>
</dbReference>
<dbReference type="GO" id="GO:0019901">
    <property type="term" value="F:protein kinase binding"/>
    <property type="evidence" value="ECO:0000318"/>
    <property type="project" value="GO_Central"/>
</dbReference>
<dbReference type="GO" id="GO:0007015">
    <property type="term" value="P:actin filament organization"/>
    <property type="evidence" value="ECO:0000318"/>
    <property type="project" value="GO_Central"/>
</dbReference>
<dbReference type="GO" id="GO:0030865">
    <property type="term" value="P:cortical cytoskeleton organization"/>
    <property type="evidence" value="ECO:0000318"/>
    <property type="project" value="GO_Central"/>
</dbReference>
<dbReference type="GO" id="GO:0007163">
    <property type="term" value="P:establishment or maintenance of cell polarity"/>
    <property type="evidence" value="ECO:0000318"/>
    <property type="project" value="GO_Central"/>
</dbReference>
<dbReference type="GO" id="GO:0032956">
    <property type="term" value="P:regulation of actin cytoskeleton organization"/>
    <property type="evidence" value="ECO:0000318"/>
    <property type="project" value="GO_Central"/>
</dbReference>
<dbReference type="GO" id="GO:0008360">
    <property type="term" value="P:regulation of cell shape"/>
    <property type="evidence" value="ECO:0000318"/>
    <property type="project" value="GO_Central"/>
</dbReference>
<dbReference type="GO" id="GO:0007165">
    <property type="term" value="P:signal transduction"/>
    <property type="evidence" value="ECO:0000318"/>
    <property type="project" value="GO_Central"/>
</dbReference>
<dbReference type="GO" id="GO:0007264">
    <property type="term" value="P:small GTPase-mediated signal transduction"/>
    <property type="evidence" value="ECO:0007669"/>
    <property type="project" value="InterPro"/>
</dbReference>
<dbReference type="CDD" id="cd18530">
    <property type="entry name" value="BACK_RHOBTB1"/>
    <property type="match status" value="1"/>
</dbReference>
<dbReference type="CDD" id="cd18355">
    <property type="entry name" value="BTB1_POZ_RHOBTB1"/>
    <property type="match status" value="1"/>
</dbReference>
<dbReference type="CDD" id="cd18358">
    <property type="entry name" value="BTB2_POZ_RHOBTB1"/>
    <property type="match status" value="1"/>
</dbReference>
<dbReference type="CDD" id="cd01873">
    <property type="entry name" value="RhoBTB"/>
    <property type="match status" value="1"/>
</dbReference>
<dbReference type="FunFam" id="3.30.710.10:FF:000069">
    <property type="entry name" value="Rho related BTB domain containing 1"/>
    <property type="match status" value="2"/>
</dbReference>
<dbReference type="FunFam" id="3.40.50.300:FF:000177">
    <property type="entry name" value="Rho-related BTB domain-containing protein 2"/>
    <property type="match status" value="1"/>
</dbReference>
<dbReference type="FunFam" id="3.30.710.10:FF:000014">
    <property type="entry name" value="Rho-related BTB domain-containing protein 2 isoform 1"/>
    <property type="match status" value="1"/>
</dbReference>
<dbReference type="Gene3D" id="3.40.50.300">
    <property type="entry name" value="P-loop containing nucleotide triphosphate hydrolases"/>
    <property type="match status" value="1"/>
</dbReference>
<dbReference type="Gene3D" id="3.30.710.10">
    <property type="entry name" value="Potassium Channel Kv1.1, Chain A"/>
    <property type="match status" value="2"/>
</dbReference>
<dbReference type="InterPro" id="IPR000210">
    <property type="entry name" value="BTB/POZ_dom"/>
</dbReference>
<dbReference type="InterPro" id="IPR027417">
    <property type="entry name" value="P-loop_NTPase"/>
</dbReference>
<dbReference type="InterPro" id="IPR011333">
    <property type="entry name" value="SKP1/BTB/POZ_sf"/>
</dbReference>
<dbReference type="InterPro" id="IPR001806">
    <property type="entry name" value="Small_GTPase"/>
</dbReference>
<dbReference type="InterPro" id="IPR003578">
    <property type="entry name" value="Small_GTPase_Rho"/>
</dbReference>
<dbReference type="PANTHER" id="PTHR24072">
    <property type="entry name" value="RHO FAMILY GTPASE"/>
    <property type="match status" value="1"/>
</dbReference>
<dbReference type="Pfam" id="PF00651">
    <property type="entry name" value="BTB"/>
    <property type="match status" value="2"/>
</dbReference>
<dbReference type="Pfam" id="PF00071">
    <property type="entry name" value="Ras"/>
    <property type="match status" value="1"/>
</dbReference>
<dbReference type="PRINTS" id="PR00449">
    <property type="entry name" value="RASTRNSFRMNG"/>
</dbReference>
<dbReference type="SMART" id="SM00225">
    <property type="entry name" value="BTB"/>
    <property type="match status" value="2"/>
</dbReference>
<dbReference type="SMART" id="SM00175">
    <property type="entry name" value="RAB"/>
    <property type="match status" value="1"/>
</dbReference>
<dbReference type="SMART" id="SM00173">
    <property type="entry name" value="RAS"/>
    <property type="match status" value="1"/>
</dbReference>
<dbReference type="SMART" id="SM00174">
    <property type="entry name" value="RHO"/>
    <property type="match status" value="1"/>
</dbReference>
<dbReference type="SUPFAM" id="SSF52540">
    <property type="entry name" value="P-loop containing nucleoside triphosphate hydrolases"/>
    <property type="match status" value="1"/>
</dbReference>
<dbReference type="SUPFAM" id="SSF54695">
    <property type="entry name" value="POZ domain"/>
    <property type="match status" value="2"/>
</dbReference>
<dbReference type="PROSITE" id="PS50097">
    <property type="entry name" value="BTB"/>
    <property type="match status" value="2"/>
</dbReference>
<dbReference type="PROSITE" id="PS51420">
    <property type="entry name" value="RHO"/>
    <property type="match status" value="1"/>
</dbReference>
<protein>
    <recommendedName>
        <fullName>Rho-related BTB domain-containing protein 1</fullName>
    </recommendedName>
</protein>
<reference key="1">
    <citation type="journal article" date="2002" name="Gene">
        <title>Genomic organization and expression profile of the small GTPases of the RhoBTB family in human and mouse.</title>
        <authorList>
            <person name="Ramos S."/>
            <person name="Khademi F."/>
            <person name="Somesh B.P."/>
            <person name="Rivero F."/>
        </authorList>
    </citation>
    <scope>NUCLEOTIDE SEQUENCE [MRNA]</scope>
    <scope>TISSUE SPECIFICITY</scope>
</reference>
<reference key="2">
    <citation type="journal article" date="1998" name="DNA Res.">
        <title>Prediction of the coding sequences of unidentified human genes. XI. The complete sequences of 100 new cDNA clones from brain which code for large proteins in vitro.</title>
        <authorList>
            <person name="Nagase T."/>
            <person name="Ishikawa K."/>
            <person name="Suyama M."/>
            <person name="Kikuno R."/>
            <person name="Miyajima N."/>
            <person name="Tanaka A."/>
            <person name="Kotani H."/>
            <person name="Nomura N."/>
            <person name="Ohara O."/>
        </authorList>
    </citation>
    <scope>NUCLEOTIDE SEQUENCE [LARGE SCALE MRNA]</scope>
    <source>
        <tissue>Brain</tissue>
    </source>
</reference>
<reference key="3">
    <citation type="journal article" date="2004" name="Nat. Genet.">
        <title>Complete sequencing and characterization of 21,243 full-length human cDNAs.</title>
        <authorList>
            <person name="Ota T."/>
            <person name="Suzuki Y."/>
            <person name="Nishikawa T."/>
            <person name="Otsuki T."/>
            <person name="Sugiyama T."/>
            <person name="Irie R."/>
            <person name="Wakamatsu A."/>
            <person name="Hayashi K."/>
            <person name="Sato H."/>
            <person name="Nagai K."/>
            <person name="Kimura K."/>
            <person name="Makita H."/>
            <person name="Sekine M."/>
            <person name="Obayashi M."/>
            <person name="Nishi T."/>
            <person name="Shibahara T."/>
            <person name="Tanaka T."/>
            <person name="Ishii S."/>
            <person name="Yamamoto J."/>
            <person name="Saito K."/>
            <person name="Kawai Y."/>
            <person name="Isono Y."/>
            <person name="Nakamura Y."/>
            <person name="Nagahari K."/>
            <person name="Murakami K."/>
            <person name="Yasuda T."/>
            <person name="Iwayanagi T."/>
            <person name="Wagatsuma M."/>
            <person name="Shiratori A."/>
            <person name="Sudo H."/>
            <person name="Hosoiri T."/>
            <person name="Kaku Y."/>
            <person name="Kodaira H."/>
            <person name="Kondo H."/>
            <person name="Sugawara M."/>
            <person name="Takahashi M."/>
            <person name="Kanda K."/>
            <person name="Yokoi T."/>
            <person name="Furuya T."/>
            <person name="Kikkawa E."/>
            <person name="Omura Y."/>
            <person name="Abe K."/>
            <person name="Kamihara K."/>
            <person name="Katsuta N."/>
            <person name="Sato K."/>
            <person name="Tanikawa M."/>
            <person name="Yamazaki M."/>
            <person name="Ninomiya K."/>
            <person name="Ishibashi T."/>
            <person name="Yamashita H."/>
            <person name="Murakawa K."/>
            <person name="Fujimori K."/>
            <person name="Tanai H."/>
            <person name="Kimata M."/>
            <person name="Watanabe M."/>
            <person name="Hiraoka S."/>
            <person name="Chiba Y."/>
            <person name="Ishida S."/>
            <person name="Ono Y."/>
            <person name="Takiguchi S."/>
            <person name="Watanabe S."/>
            <person name="Yosida M."/>
            <person name="Hotuta T."/>
            <person name="Kusano J."/>
            <person name="Kanehori K."/>
            <person name="Takahashi-Fujii A."/>
            <person name="Hara H."/>
            <person name="Tanase T.-O."/>
            <person name="Nomura Y."/>
            <person name="Togiya S."/>
            <person name="Komai F."/>
            <person name="Hara R."/>
            <person name="Takeuchi K."/>
            <person name="Arita M."/>
            <person name="Imose N."/>
            <person name="Musashino K."/>
            <person name="Yuuki H."/>
            <person name="Oshima A."/>
            <person name="Sasaki N."/>
            <person name="Aotsuka S."/>
            <person name="Yoshikawa Y."/>
            <person name="Matsunawa H."/>
            <person name="Ichihara T."/>
            <person name="Shiohata N."/>
            <person name="Sano S."/>
            <person name="Moriya S."/>
            <person name="Momiyama H."/>
            <person name="Satoh N."/>
            <person name="Takami S."/>
            <person name="Terashima Y."/>
            <person name="Suzuki O."/>
            <person name="Nakagawa S."/>
            <person name="Senoh A."/>
            <person name="Mizoguchi H."/>
            <person name="Goto Y."/>
            <person name="Shimizu F."/>
            <person name="Wakebe H."/>
            <person name="Hishigaki H."/>
            <person name="Watanabe T."/>
            <person name="Sugiyama A."/>
            <person name="Takemoto M."/>
            <person name="Kawakami B."/>
            <person name="Yamazaki M."/>
            <person name="Watanabe K."/>
            <person name="Kumagai A."/>
            <person name="Itakura S."/>
            <person name="Fukuzumi Y."/>
            <person name="Fujimori Y."/>
            <person name="Komiyama M."/>
            <person name="Tashiro H."/>
            <person name="Tanigami A."/>
            <person name="Fujiwara T."/>
            <person name="Ono T."/>
            <person name="Yamada K."/>
            <person name="Fujii Y."/>
            <person name="Ozaki K."/>
            <person name="Hirao M."/>
            <person name="Ohmori Y."/>
            <person name="Kawabata A."/>
            <person name="Hikiji T."/>
            <person name="Kobatake N."/>
            <person name="Inagaki H."/>
            <person name="Ikema Y."/>
            <person name="Okamoto S."/>
            <person name="Okitani R."/>
            <person name="Kawakami T."/>
            <person name="Noguchi S."/>
            <person name="Itoh T."/>
            <person name="Shigeta K."/>
            <person name="Senba T."/>
            <person name="Matsumura K."/>
            <person name="Nakajima Y."/>
            <person name="Mizuno T."/>
            <person name="Morinaga M."/>
            <person name="Sasaki M."/>
            <person name="Togashi T."/>
            <person name="Oyama M."/>
            <person name="Hata H."/>
            <person name="Watanabe M."/>
            <person name="Komatsu T."/>
            <person name="Mizushima-Sugano J."/>
            <person name="Satoh T."/>
            <person name="Shirai Y."/>
            <person name="Takahashi Y."/>
            <person name="Nakagawa K."/>
            <person name="Okumura K."/>
            <person name="Nagase T."/>
            <person name="Nomura N."/>
            <person name="Kikuchi H."/>
            <person name="Masuho Y."/>
            <person name="Yamashita R."/>
            <person name="Nakai K."/>
            <person name="Yada T."/>
            <person name="Nakamura Y."/>
            <person name="Ohara O."/>
            <person name="Isogai T."/>
            <person name="Sugano S."/>
        </authorList>
    </citation>
    <scope>NUCLEOTIDE SEQUENCE [LARGE SCALE MRNA]</scope>
    <source>
        <tissue>Placenta</tissue>
    </source>
</reference>
<reference key="4">
    <citation type="journal article" date="2004" name="Genome Res.">
        <title>The status, quality, and expansion of the NIH full-length cDNA project: the Mammalian Gene Collection (MGC).</title>
        <authorList>
            <consortium name="The MGC Project Team"/>
        </authorList>
    </citation>
    <scope>NUCLEOTIDE SEQUENCE [LARGE SCALE MRNA]</scope>
    <source>
        <tissue>Testis</tissue>
    </source>
</reference>
<sequence length="696" mass="79417">MDADMDYERPNVETIKCVVVGDNAVGKTRLICARACNTTLTQYQLLATHVPTVWAIDQYRVCQEVLERSRDVVDEVSVSLRLWDTFGDHHKDRRFAYGRSDVVVLCFSIANPNSLNHVKSMWYPEIKHFCPRTPVILVGCQLDLRYADLEAVNRARRPLARPIKRGDILPPEKGREVAKELGLPYYETSVFDQFGIKDVFDNAIRAALISRRHLQFWKSHLKKVQKPLLQAPFLPPKAPPPVIKIPECPSMGTNEAACLLDNPLCADVLFILQDQEHIFAHRIYLATSSSKFYDLFLMECEESPNGSEGACEKEKQSRDFQGRILSVDPEEEREEGPPRIPQADQWKSSNKSLVEALGLEAEGAVPETQTLTGWSKGFIGMHREMQVNPISKRMGPMTVVRMDASVQPGPFRTLLQFLYTGQLDEKEKDLVGLAQIAEVLEMFDLRMMVENIMNKEAFMNQEITKAFHVRKANRIKECLSKGTFSDVTFKLDDGAISAHKPLLICSCEWMAAMFGGSFVESANSEVYLPNINKISMQAVLDYLYTKQLSPNLDLDPLELIALANRFCLPHLVALAEQHAVQELTKAATSGVGIDGEVLSYLELAQFHNAHQLAAWCLHHICTNYNSVCSKFRKEIKSKSADNQEYFERHRWPPVWYLKEEDHYQRVKREREKEDIALNKHRSRRKWCFWNSSPAVA</sequence>
<accession>O94844</accession>